<organism>
    <name type="scientific">Xenopus laevis</name>
    <name type="common">African clawed frog</name>
    <dbReference type="NCBI Taxonomy" id="8355"/>
    <lineage>
        <taxon>Eukaryota</taxon>
        <taxon>Metazoa</taxon>
        <taxon>Chordata</taxon>
        <taxon>Craniata</taxon>
        <taxon>Vertebrata</taxon>
        <taxon>Euteleostomi</taxon>
        <taxon>Amphibia</taxon>
        <taxon>Batrachia</taxon>
        <taxon>Anura</taxon>
        <taxon>Pipoidea</taxon>
        <taxon>Pipidae</taxon>
        <taxon>Xenopodinae</taxon>
        <taxon>Xenopus</taxon>
        <taxon>Xenopus</taxon>
    </lineage>
</organism>
<comment type="function">
    <text evidence="1">Component of the elongator complex which is required for multiple tRNA modifications, including mcm5U (5-methoxycarbonylmethyl uridine), mcm5s2U (5-methoxycarbonylmethyl-2-thiouridine), and ncm5U (5-carbamoylmethyl uridine). The elongator complex catalyzes the formation of carboxymethyluridine in the wobble base at position 34 in tRNAs.</text>
</comment>
<comment type="pathway">
    <text evidence="1">tRNA modification; 5-methoxycarbonylmethyl-2-thiouridine-tRNA biosynthesis.</text>
</comment>
<comment type="subunit">
    <text evidence="1">Component of the elongator complex.</text>
</comment>
<comment type="subcellular location">
    <subcellularLocation>
        <location evidence="1">Cytoplasm</location>
    </subcellularLocation>
    <subcellularLocation>
        <location evidence="1">Nucleus</location>
    </subcellularLocation>
</comment>
<comment type="similarity">
    <text evidence="3">Belongs to the ELP4 family.</text>
</comment>
<comment type="caution">
    <text evidence="1">The elongator complex was originally thought to play a role in transcription elongation. However, it is no longer thought to play a direct role in this process and its primary function is thought to be in tRNA modification.</text>
</comment>
<name>ELP4_XENLA</name>
<protein>
    <recommendedName>
        <fullName>Elongator complex protein 4</fullName>
    </recommendedName>
</protein>
<dbReference type="EMBL" id="BC084604">
    <property type="protein sequence ID" value="AAH84604.1"/>
    <property type="molecule type" value="mRNA"/>
</dbReference>
<dbReference type="RefSeq" id="NP_001088363.1">
    <property type="nucleotide sequence ID" value="NM_001094894.1"/>
</dbReference>
<dbReference type="SMR" id="Q5XG58"/>
<dbReference type="BioGRID" id="105287">
    <property type="interactions" value="1"/>
</dbReference>
<dbReference type="IntAct" id="Q5XG58">
    <property type="interactions" value="1"/>
</dbReference>
<dbReference type="DNASU" id="495207"/>
<dbReference type="GeneID" id="495207"/>
<dbReference type="KEGG" id="xla:495207"/>
<dbReference type="AGR" id="Xenbase:XB-GENE-991978"/>
<dbReference type="CTD" id="495207"/>
<dbReference type="Xenbase" id="XB-GENE-991978">
    <property type="gene designation" value="elp4.S"/>
</dbReference>
<dbReference type="OrthoDB" id="289162at2759"/>
<dbReference type="UniPathway" id="UPA00988"/>
<dbReference type="Proteomes" id="UP000186698">
    <property type="component" value="Chromosome 4S"/>
</dbReference>
<dbReference type="Bgee" id="495207">
    <property type="expression patterns" value="Expressed in oocyte and 20 other cell types or tissues"/>
</dbReference>
<dbReference type="GO" id="GO:0005737">
    <property type="term" value="C:cytoplasm"/>
    <property type="evidence" value="ECO:0000250"/>
    <property type="project" value="UniProtKB"/>
</dbReference>
<dbReference type="GO" id="GO:0033588">
    <property type="term" value="C:elongator holoenzyme complex"/>
    <property type="evidence" value="ECO:0000318"/>
    <property type="project" value="GO_Central"/>
</dbReference>
<dbReference type="GO" id="GO:0008023">
    <property type="term" value="C:transcription elongation factor complex"/>
    <property type="evidence" value="ECO:0000250"/>
    <property type="project" value="UniProtKB"/>
</dbReference>
<dbReference type="GO" id="GO:0008607">
    <property type="term" value="F:phosphorylase kinase regulator activity"/>
    <property type="evidence" value="ECO:0000250"/>
    <property type="project" value="UniProtKB"/>
</dbReference>
<dbReference type="GO" id="GO:0006357">
    <property type="term" value="P:regulation of transcription by RNA polymerase II"/>
    <property type="evidence" value="ECO:0000250"/>
    <property type="project" value="UniProtKB"/>
</dbReference>
<dbReference type="GO" id="GO:0002098">
    <property type="term" value="P:tRNA wobble uridine modification"/>
    <property type="evidence" value="ECO:0000318"/>
    <property type="project" value="GO_Central"/>
</dbReference>
<dbReference type="CDD" id="cd19494">
    <property type="entry name" value="Elp4"/>
    <property type="match status" value="1"/>
</dbReference>
<dbReference type="FunFam" id="3.40.50.300:FF:000623">
    <property type="entry name" value="Elongator acetyltransferase complex subunit 4"/>
    <property type="match status" value="1"/>
</dbReference>
<dbReference type="Gene3D" id="3.40.50.300">
    <property type="entry name" value="P-loop containing nucleotide triphosphate hydrolases"/>
    <property type="match status" value="1"/>
</dbReference>
<dbReference type="InterPro" id="IPR008728">
    <property type="entry name" value="Elongator_complex_protein_4"/>
</dbReference>
<dbReference type="InterPro" id="IPR027417">
    <property type="entry name" value="P-loop_NTPase"/>
</dbReference>
<dbReference type="PANTHER" id="PTHR12896:SF1">
    <property type="entry name" value="ELONGATOR COMPLEX PROTEIN 4"/>
    <property type="match status" value="1"/>
</dbReference>
<dbReference type="PANTHER" id="PTHR12896">
    <property type="entry name" value="PAX6 NEIGHBOR PROTEIN PAXNEB"/>
    <property type="match status" value="1"/>
</dbReference>
<dbReference type="Pfam" id="PF05625">
    <property type="entry name" value="PAXNEB"/>
    <property type="match status" value="1"/>
</dbReference>
<feature type="chain" id="PRO_0000284007" description="Elongator complex protein 4">
    <location>
        <begin position="1"/>
        <end position="408"/>
    </location>
</feature>
<feature type="region of interest" description="Disordered" evidence="2">
    <location>
        <begin position="106"/>
        <end position="141"/>
    </location>
</feature>
<feature type="compositionally biased region" description="Basic and acidic residues" evidence="2">
    <location>
        <begin position="120"/>
        <end position="132"/>
    </location>
</feature>
<sequence>MAAPCHRGVSAGDDAVGTGTSFKRKVRGKFPALPGTRPSVHNGQLLVSTGVPSLDHILGGGLAVGTLLLIEEDTYGTYSHLLLKYFLAEGVVSGHEVFVASANDDPTETLQDLPSPLTDEVPRQNDPKRTKDTSGPADDSQEMMKIAWRYQNLPKVETLPISSSRFGHYYDLSKTMPPEMSAKSHRFYLPRIMSANQKQNVSEVTCNYNQLLESIQRVVHQEGYDGSNPQKRPKTILRLGIESLGSVLWADDICSQERPENQHSLTRFLYGLRGLLRTSLSVCVITVPTYLIQNKAITTRLRSLSDTVVGLESFIGSEMEANPLYKDYHGLLHVHQIPRLNSLISDGSDTKDLAFKLKRKIFAIERLHLPPDLSDTVSRSSKQDLAGSAKLLSSGCGPAAGGEKHLDF</sequence>
<evidence type="ECO:0000250" key="1">
    <source>
        <dbReference type="UniProtKB" id="Q96EB1"/>
    </source>
</evidence>
<evidence type="ECO:0000256" key="2">
    <source>
        <dbReference type="SAM" id="MobiDB-lite"/>
    </source>
</evidence>
<evidence type="ECO:0000305" key="3"/>
<keyword id="KW-0963">Cytoplasm</keyword>
<keyword id="KW-0539">Nucleus</keyword>
<keyword id="KW-1185">Reference proteome</keyword>
<keyword id="KW-0819">tRNA processing</keyword>
<gene>
    <name type="primary">elp4</name>
</gene>
<accession>Q5XG58</accession>
<reference key="1">
    <citation type="submission" date="2004-10" db="EMBL/GenBank/DDBJ databases">
        <authorList>
            <consortium name="NIH - Xenopus Gene Collection (XGC) project"/>
        </authorList>
    </citation>
    <scope>NUCLEOTIDE SEQUENCE [LARGE SCALE MRNA]</scope>
    <source>
        <tissue>Embryo</tissue>
    </source>
</reference>
<proteinExistence type="evidence at transcript level"/>